<evidence type="ECO:0000255" key="1"/>
<evidence type="ECO:0000269" key="2">
    <source>
    </source>
</evidence>
<evidence type="ECO:0000303" key="3">
    <source>
    </source>
</evidence>
<evidence type="ECO:0000305" key="4"/>
<evidence type="ECO:0000305" key="5">
    <source>
    </source>
</evidence>
<protein>
    <recommendedName>
        <fullName evidence="3">Secreted RxLR effector protein 144</fullName>
    </recommendedName>
</protein>
<dbReference type="SMR" id="P0CV60"/>
<dbReference type="GO" id="GO:0005576">
    <property type="term" value="C:extracellular region"/>
    <property type="evidence" value="ECO:0007669"/>
    <property type="project" value="UniProtKB-SubCell"/>
</dbReference>
<dbReference type="GO" id="GO:0030430">
    <property type="term" value="C:host cell cytoplasm"/>
    <property type="evidence" value="ECO:0007669"/>
    <property type="project" value="UniProtKB-SubCell"/>
</dbReference>
<dbReference type="GO" id="GO:0042025">
    <property type="term" value="C:host cell nucleus"/>
    <property type="evidence" value="ECO:0007669"/>
    <property type="project" value="UniProtKB-SubCell"/>
</dbReference>
<comment type="function">
    <text evidence="2">Secreted effector that completely suppresses the host cell death induced by cell death-inducing proteins.</text>
</comment>
<comment type="subcellular location">
    <subcellularLocation>
        <location evidence="2">Secreted</location>
    </subcellularLocation>
    <subcellularLocation>
        <location evidence="2">Host nucleus</location>
    </subcellularLocation>
    <subcellularLocation>
        <location evidence="2">Host cytoplasm</location>
    </subcellularLocation>
</comment>
<comment type="domain">
    <text evidence="5">The RxLR-dEER motif acts to carry the protein into the host cell cytoplasm through binding to cell surface phosphatidylinositol-3-phosphate.</text>
</comment>
<comment type="similarity">
    <text evidence="4">Belongs to the RxLR effector family.</text>
</comment>
<keyword id="KW-1035">Host cytoplasm</keyword>
<keyword id="KW-1048">Host nucleus</keyword>
<keyword id="KW-0964">Secreted</keyword>
<keyword id="KW-0732">Signal</keyword>
<keyword id="KW-0843">Virulence</keyword>
<feature type="signal peptide" evidence="1">
    <location>
        <begin position="1"/>
        <end position="20"/>
    </location>
</feature>
<feature type="chain" id="PRO_0000447970" description="Secreted RxLR effector protein 144">
    <location>
        <begin position="21"/>
        <end position="274"/>
    </location>
</feature>
<feature type="short sequence motif" description="RxLR-dEER" evidence="5">
    <location>
        <begin position="49"/>
        <end position="72"/>
    </location>
</feature>
<proteinExistence type="evidence at transcript level"/>
<organism>
    <name type="scientific">Plasmopara viticola</name>
    <name type="common">Downy mildew of grapevine</name>
    <name type="synonym">Botrytis viticola</name>
    <dbReference type="NCBI Taxonomy" id="143451"/>
    <lineage>
        <taxon>Eukaryota</taxon>
        <taxon>Sar</taxon>
        <taxon>Stramenopiles</taxon>
        <taxon>Oomycota</taxon>
        <taxon>Peronosporales</taxon>
        <taxon>Peronosporaceae</taxon>
        <taxon>Plasmopara</taxon>
    </lineage>
</organism>
<gene>
    <name evidence="3" type="primary">RXLR144</name>
</gene>
<reference key="1">
    <citation type="journal article" date="2018" name="Front. Plant Sci.">
        <title>In planta functional analysis and subcellular localization of the oomycete pathogen Plasmopara viticola candidate RXLR effector repertoire.</title>
        <authorList>
            <person name="Liu Y."/>
            <person name="Lan X."/>
            <person name="Song S."/>
            <person name="Yin L."/>
            <person name="Dry I.B."/>
            <person name="Qu J."/>
            <person name="Xiang J."/>
            <person name="Lu J."/>
        </authorList>
    </citation>
    <scope>NUCLEOTIDE SEQUENCE [MRNA]</scope>
    <scope>DOMAIN</scope>
    <scope>FUNCTION</scope>
    <scope>SUBCELLULAR LOCATION</scope>
</reference>
<name>RL144_PLAVT</name>
<sequence length="274" mass="30914">MRPWLLLLVGLSSFFALSTSVNRAKNSGSDFDLESRASTTNVHSILSKRKLRAFGGDTNTLKDSGKARREEKVWKLFCSVFLQLDDKKKCMFETNQVSSHQPEPRPALSFMPGPKPAHSLVPESKPVRSLMTGNAPVRSIATELKLVLPRITETVKNPSKSQVVMLWLHKVADFSKSEHGVNTMAYRTLYEWLSPSFSDAKLAKFFVGLREDEALRETAEKMLAYMLIKSTSTEAVGRAWLKSGEHPSRLFESMNFKEADFKDTVFLGWLKYAS</sequence>
<accession>P0CV60</accession>